<accession>B5FHA6</accession>
<proteinExistence type="inferred from homology"/>
<protein>
    <recommendedName>
        <fullName evidence="1">Chaperone protein DnaK</fullName>
    </recommendedName>
    <alternativeName>
        <fullName evidence="1">HSP70</fullName>
    </alternativeName>
    <alternativeName>
        <fullName evidence="1">Heat shock 70 kDa protein</fullName>
    </alternativeName>
    <alternativeName>
        <fullName evidence="1">Heat shock protein 70</fullName>
    </alternativeName>
</protein>
<feature type="chain" id="PRO_1000119750" description="Chaperone protein DnaK">
    <location>
        <begin position="1"/>
        <end position="638"/>
    </location>
</feature>
<feature type="region of interest" description="Disordered" evidence="2">
    <location>
        <begin position="603"/>
        <end position="638"/>
    </location>
</feature>
<feature type="compositionally biased region" description="Low complexity" evidence="2">
    <location>
        <begin position="603"/>
        <end position="620"/>
    </location>
</feature>
<feature type="modified residue" description="Phosphothreonine; by autocatalysis" evidence="1">
    <location>
        <position position="199"/>
    </location>
</feature>
<name>DNAK_SALDC</name>
<sequence length="638" mass="69258">MGKIIGIDLGTTNSCVAIMDGTQARVLENAEGDRTTPSIIAYTQDGETLVGQPAKRQAVTNPQNTLFAIKRLIGRRFQDEEVQRDVSIMPYKIIGADNGDAWLDVKGQKMAPPQISAEVLKKMKKTAEDYLGEPVTEAVITVPAYFNDAQRQATKDAGRIAGLEVKRIINEPTAAALAYGLDKEVGNRTIAVYDLGGGTFDISIIEIDEVDGEKTFEVLATNGDTHLGGEDFDTRLINYLVDEFKKDQGIDLRNDPLAMQRLKEAAEKAKIELSSAQQTDVNLPYITADATGPKHMNIKVTRAKLESLVEDLVNRSIEPLKVALQDAGLSVSDINDVILVGGQTRMPMVQKKVAEFFGKEPRKDVNPDEAVAIGAAVQGGVLTGDVKDVLLLDVTPLSLGIETMGGVMTPLITKNTTIPTKHSQVFSTAEDNQSAVTIHVLQGERKRASDNKSLGQFNLDGINPAPRGMPQIEVTFDIDADGILHVSAKDKNSGKEQKITIKASSGLNEEEIQKMVRDAEANAESDRKFEELVQTRNQGDHLLHSTRKQVEEAGDKLPADDKTAIESALNALETALKGEDKAAIEAKMQELAQVSQKLMEIAQQQHAQQQAGSADASANNAKDDDVVDAEFEEVKDKK</sequence>
<keyword id="KW-0067">ATP-binding</keyword>
<keyword id="KW-0143">Chaperone</keyword>
<keyword id="KW-0547">Nucleotide-binding</keyword>
<keyword id="KW-0597">Phosphoprotein</keyword>
<keyword id="KW-0346">Stress response</keyword>
<comment type="function">
    <text evidence="1">Acts as a chaperone.</text>
</comment>
<comment type="induction">
    <text evidence="1">By stress conditions e.g. heat shock.</text>
</comment>
<comment type="similarity">
    <text evidence="1">Belongs to the heat shock protein 70 family.</text>
</comment>
<evidence type="ECO:0000255" key="1">
    <source>
        <dbReference type="HAMAP-Rule" id="MF_00332"/>
    </source>
</evidence>
<evidence type="ECO:0000256" key="2">
    <source>
        <dbReference type="SAM" id="MobiDB-lite"/>
    </source>
</evidence>
<organism>
    <name type="scientific">Salmonella dublin (strain CT_02021853)</name>
    <dbReference type="NCBI Taxonomy" id="439851"/>
    <lineage>
        <taxon>Bacteria</taxon>
        <taxon>Pseudomonadati</taxon>
        <taxon>Pseudomonadota</taxon>
        <taxon>Gammaproteobacteria</taxon>
        <taxon>Enterobacterales</taxon>
        <taxon>Enterobacteriaceae</taxon>
        <taxon>Salmonella</taxon>
    </lineage>
</organism>
<dbReference type="EMBL" id="CP001144">
    <property type="protein sequence ID" value="ACH74625.1"/>
    <property type="molecule type" value="Genomic_DNA"/>
</dbReference>
<dbReference type="RefSeq" id="WP_000516125.1">
    <property type="nucleotide sequence ID" value="NC_011205.1"/>
</dbReference>
<dbReference type="SMR" id="B5FHA6"/>
<dbReference type="KEGG" id="sed:SeD_A0012"/>
<dbReference type="HOGENOM" id="CLU_005965_2_1_6"/>
<dbReference type="Proteomes" id="UP000008322">
    <property type="component" value="Chromosome"/>
</dbReference>
<dbReference type="GO" id="GO:0005524">
    <property type="term" value="F:ATP binding"/>
    <property type="evidence" value="ECO:0007669"/>
    <property type="project" value="UniProtKB-UniRule"/>
</dbReference>
<dbReference type="GO" id="GO:0140662">
    <property type="term" value="F:ATP-dependent protein folding chaperone"/>
    <property type="evidence" value="ECO:0007669"/>
    <property type="project" value="InterPro"/>
</dbReference>
<dbReference type="GO" id="GO:0051082">
    <property type="term" value="F:unfolded protein binding"/>
    <property type="evidence" value="ECO:0007669"/>
    <property type="project" value="InterPro"/>
</dbReference>
<dbReference type="CDD" id="cd10234">
    <property type="entry name" value="ASKHA_NBD_HSP70_DnaK-like"/>
    <property type="match status" value="1"/>
</dbReference>
<dbReference type="FunFam" id="2.60.34.10:FF:000014">
    <property type="entry name" value="Chaperone protein DnaK HSP70"/>
    <property type="match status" value="1"/>
</dbReference>
<dbReference type="FunFam" id="3.30.30.30:FF:000003">
    <property type="entry name" value="Heat shock protein 9"/>
    <property type="match status" value="1"/>
</dbReference>
<dbReference type="FunFam" id="1.20.1270.10:FF:000001">
    <property type="entry name" value="Molecular chaperone DnaK"/>
    <property type="match status" value="1"/>
</dbReference>
<dbReference type="FunFam" id="3.30.420.40:FF:000004">
    <property type="entry name" value="Molecular chaperone DnaK"/>
    <property type="match status" value="1"/>
</dbReference>
<dbReference type="FunFam" id="3.90.640.10:FF:000003">
    <property type="entry name" value="Molecular chaperone DnaK"/>
    <property type="match status" value="1"/>
</dbReference>
<dbReference type="Gene3D" id="1.20.1270.10">
    <property type="match status" value="1"/>
</dbReference>
<dbReference type="Gene3D" id="3.30.420.40">
    <property type="match status" value="2"/>
</dbReference>
<dbReference type="Gene3D" id="3.90.640.10">
    <property type="entry name" value="Actin, Chain A, domain 4"/>
    <property type="match status" value="1"/>
</dbReference>
<dbReference type="Gene3D" id="2.60.34.10">
    <property type="entry name" value="Substrate Binding Domain Of DNAk, Chain A, domain 1"/>
    <property type="match status" value="1"/>
</dbReference>
<dbReference type="HAMAP" id="MF_00332">
    <property type="entry name" value="DnaK"/>
    <property type="match status" value="1"/>
</dbReference>
<dbReference type="InterPro" id="IPR043129">
    <property type="entry name" value="ATPase_NBD"/>
</dbReference>
<dbReference type="InterPro" id="IPR012725">
    <property type="entry name" value="Chaperone_DnaK"/>
</dbReference>
<dbReference type="InterPro" id="IPR018181">
    <property type="entry name" value="Heat_shock_70_CS"/>
</dbReference>
<dbReference type="InterPro" id="IPR029048">
    <property type="entry name" value="HSP70_C_sf"/>
</dbReference>
<dbReference type="InterPro" id="IPR029047">
    <property type="entry name" value="HSP70_peptide-bd_sf"/>
</dbReference>
<dbReference type="InterPro" id="IPR013126">
    <property type="entry name" value="Hsp_70_fam"/>
</dbReference>
<dbReference type="NCBIfam" id="NF001413">
    <property type="entry name" value="PRK00290.1"/>
    <property type="match status" value="1"/>
</dbReference>
<dbReference type="NCBIfam" id="NF003520">
    <property type="entry name" value="PRK05183.1"/>
    <property type="match status" value="1"/>
</dbReference>
<dbReference type="NCBIfam" id="TIGR02350">
    <property type="entry name" value="prok_dnaK"/>
    <property type="match status" value="1"/>
</dbReference>
<dbReference type="PANTHER" id="PTHR19375">
    <property type="entry name" value="HEAT SHOCK PROTEIN 70KDA"/>
    <property type="match status" value="1"/>
</dbReference>
<dbReference type="Pfam" id="PF00012">
    <property type="entry name" value="HSP70"/>
    <property type="match status" value="1"/>
</dbReference>
<dbReference type="PRINTS" id="PR00301">
    <property type="entry name" value="HEATSHOCK70"/>
</dbReference>
<dbReference type="SUPFAM" id="SSF53067">
    <property type="entry name" value="Actin-like ATPase domain"/>
    <property type="match status" value="2"/>
</dbReference>
<dbReference type="SUPFAM" id="SSF100934">
    <property type="entry name" value="Heat shock protein 70kD (HSP70), C-terminal subdomain"/>
    <property type="match status" value="1"/>
</dbReference>
<dbReference type="SUPFAM" id="SSF100920">
    <property type="entry name" value="Heat shock protein 70kD (HSP70), peptide-binding domain"/>
    <property type="match status" value="1"/>
</dbReference>
<dbReference type="PROSITE" id="PS00297">
    <property type="entry name" value="HSP70_1"/>
    <property type="match status" value="1"/>
</dbReference>
<dbReference type="PROSITE" id="PS00329">
    <property type="entry name" value="HSP70_2"/>
    <property type="match status" value="1"/>
</dbReference>
<dbReference type="PROSITE" id="PS01036">
    <property type="entry name" value="HSP70_3"/>
    <property type="match status" value="1"/>
</dbReference>
<gene>
    <name evidence="1" type="primary">dnaK</name>
    <name type="ordered locus">SeD_A0012</name>
</gene>
<reference key="1">
    <citation type="journal article" date="2011" name="J. Bacteriol.">
        <title>Comparative genomics of 28 Salmonella enterica isolates: evidence for CRISPR-mediated adaptive sublineage evolution.</title>
        <authorList>
            <person name="Fricke W.F."/>
            <person name="Mammel M.K."/>
            <person name="McDermott P.F."/>
            <person name="Tartera C."/>
            <person name="White D.G."/>
            <person name="Leclerc J.E."/>
            <person name="Ravel J."/>
            <person name="Cebula T.A."/>
        </authorList>
    </citation>
    <scope>NUCLEOTIDE SEQUENCE [LARGE SCALE GENOMIC DNA]</scope>
    <source>
        <strain>CT_02021853</strain>
    </source>
</reference>